<evidence type="ECO:0000255" key="1">
    <source>
        <dbReference type="HAMAP-Rule" id="MF_00185"/>
    </source>
</evidence>
<reference key="1">
    <citation type="submission" date="2007-10" db="EMBL/GenBank/DDBJ databases">
        <title>Brucella canis ATCC 23365 whole genome shotgun sequencing project.</title>
        <authorList>
            <person name="Setubal J.C."/>
            <person name="Bowns C."/>
            <person name="Boyle S."/>
            <person name="Crasta O.R."/>
            <person name="Czar M.J."/>
            <person name="Dharmanolla C."/>
            <person name="Gillespie J.J."/>
            <person name="Kenyon R.W."/>
            <person name="Lu J."/>
            <person name="Mane S."/>
            <person name="Mohapatra S."/>
            <person name="Nagrani S."/>
            <person name="Purkayastha A."/>
            <person name="Rajasimha H.K."/>
            <person name="Shallom J.M."/>
            <person name="Shallom S."/>
            <person name="Shukla M."/>
            <person name="Snyder E.E."/>
            <person name="Sobral B.W."/>
            <person name="Wattam A.R."/>
            <person name="Will R."/>
            <person name="Williams K."/>
            <person name="Yoo H."/>
            <person name="Bruce D."/>
            <person name="Detter C."/>
            <person name="Munk C."/>
            <person name="Brettin T.S."/>
        </authorList>
    </citation>
    <scope>NUCLEOTIDE SEQUENCE [LARGE SCALE GENOMIC DNA]</scope>
    <source>
        <strain>ATCC 23365 / NCTC 10854 / RM-666</strain>
    </source>
</reference>
<proteinExistence type="inferred from homology"/>
<gene>
    <name evidence="1" type="primary">miaA</name>
    <name type="ordered locus">BCAN_A1422</name>
</gene>
<feature type="chain" id="PRO_1000077387" description="tRNA dimethylallyltransferase">
    <location>
        <begin position="1"/>
        <end position="310"/>
    </location>
</feature>
<feature type="region of interest" description="Interaction with substrate tRNA" evidence="1">
    <location>
        <begin position="39"/>
        <end position="42"/>
    </location>
</feature>
<feature type="region of interest" description="Interaction with substrate tRNA" evidence="1">
    <location>
        <begin position="163"/>
        <end position="167"/>
    </location>
</feature>
<feature type="binding site" evidence="1">
    <location>
        <begin position="14"/>
        <end position="21"/>
    </location>
    <ligand>
        <name>ATP</name>
        <dbReference type="ChEBI" id="CHEBI:30616"/>
    </ligand>
</feature>
<feature type="binding site" evidence="1">
    <location>
        <begin position="16"/>
        <end position="21"/>
    </location>
    <ligand>
        <name>substrate</name>
    </ligand>
</feature>
<feature type="site" description="Interaction with substrate tRNA" evidence="1">
    <location>
        <position position="105"/>
    </location>
</feature>
<feature type="site" description="Interaction with substrate tRNA" evidence="1">
    <location>
        <position position="127"/>
    </location>
</feature>
<protein>
    <recommendedName>
        <fullName evidence="1">tRNA dimethylallyltransferase</fullName>
        <ecNumber evidence="1">2.5.1.75</ecNumber>
    </recommendedName>
    <alternativeName>
        <fullName evidence="1">Dimethylallyl diphosphate:tRNA dimethylallyltransferase</fullName>
        <shortName evidence="1">DMAPP:tRNA dimethylallyltransferase</shortName>
        <shortName evidence="1">DMATase</shortName>
    </alternativeName>
    <alternativeName>
        <fullName evidence="1">Isopentenyl-diphosphate:tRNA isopentenyltransferase</fullName>
        <shortName evidence="1">IPP transferase</shortName>
        <shortName evidence="1">IPPT</shortName>
        <shortName evidence="1">IPTase</shortName>
    </alternativeName>
</protein>
<keyword id="KW-0067">ATP-binding</keyword>
<keyword id="KW-0460">Magnesium</keyword>
<keyword id="KW-0547">Nucleotide-binding</keyword>
<keyword id="KW-1185">Reference proteome</keyword>
<keyword id="KW-0808">Transferase</keyword>
<keyword id="KW-0819">tRNA processing</keyword>
<comment type="function">
    <text evidence="1">Catalyzes the transfer of a dimethylallyl group onto the adenine at position 37 in tRNAs that read codons beginning with uridine, leading to the formation of N6-(dimethylallyl)adenosine (i(6)A).</text>
</comment>
<comment type="catalytic activity">
    <reaction evidence="1">
        <text>adenosine(37) in tRNA + dimethylallyl diphosphate = N(6)-dimethylallyladenosine(37) in tRNA + diphosphate</text>
        <dbReference type="Rhea" id="RHEA:26482"/>
        <dbReference type="Rhea" id="RHEA-COMP:10162"/>
        <dbReference type="Rhea" id="RHEA-COMP:10375"/>
        <dbReference type="ChEBI" id="CHEBI:33019"/>
        <dbReference type="ChEBI" id="CHEBI:57623"/>
        <dbReference type="ChEBI" id="CHEBI:74411"/>
        <dbReference type="ChEBI" id="CHEBI:74415"/>
        <dbReference type="EC" id="2.5.1.75"/>
    </reaction>
</comment>
<comment type="cofactor">
    <cofactor evidence="1">
        <name>Mg(2+)</name>
        <dbReference type="ChEBI" id="CHEBI:18420"/>
    </cofactor>
</comment>
<comment type="subunit">
    <text evidence="1">Monomer.</text>
</comment>
<comment type="similarity">
    <text evidence="1">Belongs to the IPP transferase family.</text>
</comment>
<dbReference type="EC" id="2.5.1.75" evidence="1"/>
<dbReference type="EMBL" id="CP000872">
    <property type="protein sequence ID" value="ABX62453.1"/>
    <property type="molecule type" value="Genomic_DNA"/>
</dbReference>
<dbReference type="RefSeq" id="WP_004688534.1">
    <property type="nucleotide sequence ID" value="NC_010103.1"/>
</dbReference>
<dbReference type="SMR" id="A9M648"/>
<dbReference type="GeneID" id="97533398"/>
<dbReference type="KEGG" id="bcs:BCAN_A1422"/>
<dbReference type="HOGENOM" id="CLU_032616_0_1_5"/>
<dbReference type="PhylomeDB" id="A9M648"/>
<dbReference type="PRO" id="PR:A9M648"/>
<dbReference type="Proteomes" id="UP000001385">
    <property type="component" value="Chromosome I"/>
</dbReference>
<dbReference type="GO" id="GO:0005524">
    <property type="term" value="F:ATP binding"/>
    <property type="evidence" value="ECO:0007669"/>
    <property type="project" value="UniProtKB-UniRule"/>
</dbReference>
<dbReference type="GO" id="GO:0052381">
    <property type="term" value="F:tRNA dimethylallyltransferase activity"/>
    <property type="evidence" value="ECO:0007669"/>
    <property type="project" value="UniProtKB-UniRule"/>
</dbReference>
<dbReference type="GO" id="GO:0006400">
    <property type="term" value="P:tRNA modification"/>
    <property type="evidence" value="ECO:0007669"/>
    <property type="project" value="TreeGrafter"/>
</dbReference>
<dbReference type="Gene3D" id="1.10.20.140">
    <property type="match status" value="1"/>
</dbReference>
<dbReference type="Gene3D" id="3.40.50.300">
    <property type="entry name" value="P-loop containing nucleotide triphosphate hydrolases"/>
    <property type="match status" value="1"/>
</dbReference>
<dbReference type="HAMAP" id="MF_00185">
    <property type="entry name" value="IPP_trans"/>
    <property type="match status" value="1"/>
</dbReference>
<dbReference type="InterPro" id="IPR039657">
    <property type="entry name" value="Dimethylallyltransferase"/>
</dbReference>
<dbReference type="InterPro" id="IPR018022">
    <property type="entry name" value="IPT"/>
</dbReference>
<dbReference type="InterPro" id="IPR027417">
    <property type="entry name" value="P-loop_NTPase"/>
</dbReference>
<dbReference type="NCBIfam" id="TIGR00174">
    <property type="entry name" value="miaA"/>
    <property type="match status" value="1"/>
</dbReference>
<dbReference type="PANTHER" id="PTHR11088">
    <property type="entry name" value="TRNA DIMETHYLALLYLTRANSFERASE"/>
    <property type="match status" value="1"/>
</dbReference>
<dbReference type="PANTHER" id="PTHR11088:SF60">
    <property type="entry name" value="TRNA DIMETHYLALLYLTRANSFERASE"/>
    <property type="match status" value="1"/>
</dbReference>
<dbReference type="Pfam" id="PF01715">
    <property type="entry name" value="IPPT"/>
    <property type="match status" value="1"/>
</dbReference>
<dbReference type="SUPFAM" id="SSF52540">
    <property type="entry name" value="P-loop containing nucleoside triphosphate hydrolases"/>
    <property type="match status" value="2"/>
</dbReference>
<sequence length="310" mass="34015">MSEDAVKNAILIAGPTASGKSALAIRMAKATGGFIVNTDSMQVYGVLDLLTARPSRADLAEAEHFLYGHVPPSSTYSTGKWFEDVEALLGRCELQGRVPIFVGGTGLYFRALLGGLSQMPEVSAQVRDHWRGRMEAEGAKALHAVLCVRDPAIAAALQPSDSQRIVRALEVLESTGKSLLEWQKVKGRALVDDQSAQKIVLRPDRAWLGERIARRFSAMWAEGAIDEVRALLALDLDPALPAMKAIGVREVSAFLAETMSREEAIERSVIATRQYAKRQSTWFRNQLGEDWRVYASGEEVFQGGSFRDPQ</sequence>
<accession>A9M648</accession>
<organism>
    <name type="scientific">Brucella canis (strain ATCC 23365 / NCTC 10854 / RM-666)</name>
    <dbReference type="NCBI Taxonomy" id="483179"/>
    <lineage>
        <taxon>Bacteria</taxon>
        <taxon>Pseudomonadati</taxon>
        <taxon>Pseudomonadota</taxon>
        <taxon>Alphaproteobacteria</taxon>
        <taxon>Hyphomicrobiales</taxon>
        <taxon>Brucellaceae</taxon>
        <taxon>Brucella/Ochrobactrum group</taxon>
        <taxon>Brucella</taxon>
    </lineage>
</organism>
<name>MIAA_BRUC2</name>